<feature type="chain" id="PRO_0000085776" description="Cyclin-dependent kinase 3">
    <location>
        <begin position="1"/>
        <end position="305"/>
    </location>
</feature>
<feature type="domain" description="Protein kinase" evidence="2">
    <location>
        <begin position="4"/>
        <end position="286"/>
    </location>
</feature>
<feature type="active site" description="Proton acceptor" evidence="2 3">
    <location>
        <position position="127"/>
    </location>
</feature>
<feature type="binding site" evidence="2">
    <location>
        <begin position="10"/>
        <end position="18"/>
    </location>
    <ligand>
        <name>ATP</name>
        <dbReference type="ChEBI" id="CHEBI:30616"/>
    </ligand>
</feature>
<feature type="binding site" evidence="2">
    <location>
        <position position="33"/>
    </location>
    <ligand>
        <name>ATP</name>
        <dbReference type="ChEBI" id="CHEBI:30616"/>
    </ligand>
</feature>
<feature type="sequence variant" id="VAR_041973" description="In a glioblastoma multiforme sample; somatic mutation." evidence="5">
    <original>S</original>
    <variation>N</variation>
    <location>
        <position position="106"/>
    </location>
</feature>
<feature type="sequence variant" id="VAR_041974" description="In dbSNP:rs34918446." evidence="5">
    <original>I</original>
    <variation>T</variation>
    <location>
        <position position="124"/>
    </location>
</feature>
<feature type="sequence variant" id="VAR_041975" description="In dbSNP:rs34670267." evidence="5">
    <original>R</original>
    <variation>H</variation>
    <location>
        <position position="214"/>
    </location>
</feature>
<feature type="sequence variant" id="VAR_021101" description="In dbSNP:rs2069532." evidence="8">
    <original>T</original>
    <variation>I</variation>
    <location>
        <position position="226"/>
    </location>
</feature>
<feature type="sequence variant" id="VAR_021102" description="In dbSNP:rs17884251." evidence="5 8">
    <original>M</original>
    <variation>T</variation>
    <location>
        <position position="264"/>
    </location>
</feature>
<feature type="strand" evidence="10">
    <location>
        <begin position="4"/>
        <end position="12"/>
    </location>
</feature>
<feature type="strand" evidence="10">
    <location>
        <begin position="14"/>
        <end position="23"/>
    </location>
</feature>
<feature type="turn" evidence="10">
    <location>
        <begin position="24"/>
        <end position="26"/>
    </location>
</feature>
<feature type="strand" evidence="10">
    <location>
        <begin position="29"/>
        <end position="36"/>
    </location>
</feature>
<feature type="helix" evidence="10">
    <location>
        <begin position="37"/>
        <end position="39"/>
    </location>
</feature>
<feature type="helix" evidence="10">
    <location>
        <begin position="46"/>
        <end position="55"/>
    </location>
</feature>
<feature type="strand" evidence="10">
    <location>
        <begin position="66"/>
        <end position="72"/>
    </location>
</feature>
<feature type="strand" evidence="10">
    <location>
        <begin position="75"/>
        <end position="81"/>
    </location>
</feature>
<feature type="strand" evidence="10">
    <location>
        <begin position="84"/>
        <end position="86"/>
    </location>
</feature>
<feature type="helix" evidence="10">
    <location>
        <begin position="87"/>
        <end position="92"/>
    </location>
</feature>
<feature type="turn" evidence="10">
    <location>
        <begin position="94"/>
        <end position="96"/>
    </location>
</feature>
<feature type="helix" evidence="10">
    <location>
        <begin position="101"/>
        <end position="120"/>
    </location>
</feature>
<feature type="helix" evidence="10">
    <location>
        <begin position="130"/>
        <end position="132"/>
    </location>
</feature>
<feature type="strand" evidence="10">
    <location>
        <begin position="133"/>
        <end position="135"/>
    </location>
</feature>
<feature type="strand" evidence="11">
    <location>
        <begin position="137"/>
        <end position="139"/>
    </location>
</feature>
<feature type="strand" evidence="10">
    <location>
        <begin position="141"/>
        <end position="143"/>
    </location>
</feature>
<feature type="helix" evidence="10">
    <location>
        <begin position="146"/>
        <end position="148"/>
    </location>
</feature>
<feature type="helix" evidence="10">
    <location>
        <begin position="166"/>
        <end position="168"/>
    </location>
</feature>
<feature type="helix" evidence="10">
    <location>
        <begin position="171"/>
        <end position="174"/>
    </location>
</feature>
<feature type="helix" evidence="10">
    <location>
        <begin position="183"/>
        <end position="198"/>
    </location>
</feature>
<feature type="helix" evidence="10">
    <location>
        <begin position="208"/>
        <end position="219"/>
    </location>
</feature>
<feature type="turn" evidence="10">
    <location>
        <begin position="224"/>
        <end position="226"/>
    </location>
</feature>
<feature type="helix" evidence="10">
    <location>
        <begin position="230"/>
        <end position="232"/>
    </location>
</feature>
<feature type="helix" evidence="10">
    <location>
        <begin position="248"/>
        <end position="250"/>
    </location>
</feature>
<feature type="helix" evidence="10">
    <location>
        <begin position="257"/>
        <end position="266"/>
    </location>
</feature>
<feature type="turn" evidence="10">
    <location>
        <begin position="271"/>
        <end position="273"/>
    </location>
</feature>
<feature type="helix" evidence="10">
    <location>
        <begin position="277"/>
        <end position="281"/>
    </location>
</feature>
<feature type="helix" evidence="10">
    <location>
        <begin position="284"/>
        <end position="286"/>
    </location>
</feature>
<name>CDK3_HUMAN</name>
<keyword id="KW-0002">3D-structure</keyword>
<keyword id="KW-0067">ATP-binding</keyword>
<keyword id="KW-0131">Cell cycle</keyword>
<keyword id="KW-0132">Cell division</keyword>
<keyword id="KW-0418">Kinase</keyword>
<keyword id="KW-0498">Mitosis</keyword>
<keyword id="KW-0547">Nucleotide-binding</keyword>
<keyword id="KW-1267">Proteomics identification</keyword>
<keyword id="KW-1185">Reference proteome</keyword>
<keyword id="KW-0723">Serine/threonine-protein kinase</keyword>
<keyword id="KW-0808">Transferase</keyword>
<sequence length="305" mass="35046">MDMFQKVEKIGEGTYGVVYKAKNRETGQLVALKKIRLDLEMEGVPSTAIREISLLKELKHPNIVRLLDVVHNERKLYLVFEFLSQDLKKYMDSTPGSELPLHLIKSYLFQLLQGVSFCHSHRVIHRDLKPQNLLINELGAIKLADFGLARAFGVPLRTYTHEVVTLWYRAPEILLGSKFYTTAVDIWSIGCIFAEMVTRKALFPGDSEIDQLFRIFRMLGTPSEDTWPGVTQLPDYKGSFPKWTRKGLEEIVPNLEPEGRDLLMQLLQYDPSQRITAKTALAHPYFSSPEPSPAARQYVLQRFRH</sequence>
<organism>
    <name type="scientific">Homo sapiens</name>
    <name type="common">Human</name>
    <dbReference type="NCBI Taxonomy" id="9606"/>
    <lineage>
        <taxon>Eukaryota</taxon>
        <taxon>Metazoa</taxon>
        <taxon>Chordata</taxon>
        <taxon>Craniata</taxon>
        <taxon>Vertebrata</taxon>
        <taxon>Euteleostomi</taxon>
        <taxon>Mammalia</taxon>
        <taxon>Eutheria</taxon>
        <taxon>Euarchontoglires</taxon>
        <taxon>Primates</taxon>
        <taxon>Haplorrhini</taxon>
        <taxon>Catarrhini</taxon>
        <taxon>Hominidae</taxon>
        <taxon>Homo</taxon>
    </lineage>
</organism>
<evidence type="ECO:0000250" key="1"/>
<evidence type="ECO:0000255" key="2">
    <source>
        <dbReference type="PROSITE-ProRule" id="PRU00159"/>
    </source>
</evidence>
<evidence type="ECO:0000255" key="3">
    <source>
        <dbReference type="PROSITE-ProRule" id="PRU10027"/>
    </source>
</evidence>
<evidence type="ECO:0000269" key="4">
    <source>
    </source>
</evidence>
<evidence type="ECO:0000269" key="5">
    <source>
    </source>
</evidence>
<evidence type="ECO:0000269" key="6">
    <source>
    </source>
</evidence>
<evidence type="ECO:0000269" key="7">
    <source>
    </source>
</evidence>
<evidence type="ECO:0000269" key="8">
    <source ref="2"/>
</evidence>
<evidence type="ECO:0000305" key="9"/>
<evidence type="ECO:0007829" key="10">
    <source>
        <dbReference type="PDB" id="7XQK"/>
    </source>
</evidence>
<evidence type="ECO:0007829" key="11">
    <source>
        <dbReference type="PDB" id="8H4R"/>
    </source>
</evidence>
<dbReference type="EC" id="2.7.11.22"/>
<dbReference type="EMBL" id="X66357">
    <property type="protein sequence ID" value="CAA47001.1"/>
    <property type="molecule type" value="mRNA"/>
</dbReference>
<dbReference type="EMBL" id="AY789470">
    <property type="protein sequence ID" value="AAV40830.1"/>
    <property type="molecule type" value="Genomic_DNA"/>
</dbReference>
<dbReference type="CCDS" id="CCDS11736.1"/>
<dbReference type="PIR" id="S23382">
    <property type="entry name" value="S23382"/>
</dbReference>
<dbReference type="RefSeq" id="NP_001249.1">
    <property type="nucleotide sequence ID" value="NM_001258.4"/>
</dbReference>
<dbReference type="PDB" id="7XQK">
    <property type="method" value="X-ray"/>
    <property type="resolution" value="2.25 A"/>
    <property type="chains" value="A=1-305"/>
</dbReference>
<dbReference type="PDB" id="8H4R">
    <property type="method" value="X-ray"/>
    <property type="resolution" value="2.75 A"/>
    <property type="chains" value="A=1-305"/>
</dbReference>
<dbReference type="PDBsum" id="7XQK"/>
<dbReference type="PDBsum" id="8H4R"/>
<dbReference type="SMR" id="Q00526"/>
<dbReference type="BioGRID" id="107453">
    <property type="interactions" value="161"/>
</dbReference>
<dbReference type="ComplexPortal" id="CPX-330">
    <property type="entry name" value="Cyclin C-CDK3 complex"/>
</dbReference>
<dbReference type="CORUM" id="Q00526"/>
<dbReference type="DIP" id="DIP-686N"/>
<dbReference type="ELM" id="Q00526"/>
<dbReference type="FunCoup" id="Q00526">
    <property type="interactions" value="1037"/>
</dbReference>
<dbReference type="IntAct" id="Q00526">
    <property type="interactions" value="64"/>
</dbReference>
<dbReference type="MINT" id="Q00526"/>
<dbReference type="STRING" id="9606.ENSP00000410561"/>
<dbReference type="BindingDB" id="Q00526"/>
<dbReference type="ChEMBL" id="CHEMBL4442"/>
<dbReference type="DrugCentral" id="Q00526"/>
<dbReference type="GuidetoPHARMACOLOGY" id="1975"/>
<dbReference type="iPTMnet" id="Q00526"/>
<dbReference type="PhosphoSitePlus" id="Q00526"/>
<dbReference type="SwissPalm" id="Q00526"/>
<dbReference type="BioMuta" id="CDK3"/>
<dbReference type="DMDM" id="231726"/>
<dbReference type="jPOST" id="Q00526"/>
<dbReference type="MassIVE" id="Q00526"/>
<dbReference type="PaxDb" id="9606-ENSP00000400088"/>
<dbReference type="PeptideAtlas" id="Q00526"/>
<dbReference type="ProteomicsDB" id="57848"/>
<dbReference type="Antibodypedia" id="46111">
    <property type="antibodies" value="130 antibodies from 27 providers"/>
</dbReference>
<dbReference type="DNASU" id="1018"/>
<dbReference type="Ensembl" id="ENST00000425876.6">
    <property type="protein sequence ID" value="ENSP00000410561.1"/>
    <property type="gene ID" value="ENSG00000250506.9"/>
</dbReference>
<dbReference type="Ensembl" id="ENST00000448471.3">
    <property type="protein sequence ID" value="ENSP00000400088.1"/>
    <property type="gene ID" value="ENSG00000250506.9"/>
</dbReference>
<dbReference type="GeneID" id="1018"/>
<dbReference type="KEGG" id="hsa:1018"/>
<dbReference type="MANE-Select" id="ENST00000448471.3">
    <property type="protein sequence ID" value="ENSP00000400088.1"/>
    <property type="RefSeq nucleotide sequence ID" value="NM_001258.4"/>
    <property type="RefSeq protein sequence ID" value="NP_001249.1"/>
</dbReference>
<dbReference type="UCSC" id="uc010dgt.3">
    <property type="organism name" value="human"/>
</dbReference>
<dbReference type="AGR" id="HGNC:1772"/>
<dbReference type="CTD" id="1018"/>
<dbReference type="DisGeNET" id="1018"/>
<dbReference type="GeneCards" id="CDK3"/>
<dbReference type="HGNC" id="HGNC:1772">
    <property type="gene designation" value="CDK3"/>
</dbReference>
<dbReference type="HPA" id="ENSG00000250506">
    <property type="expression patterns" value="Low tissue specificity"/>
</dbReference>
<dbReference type="MIM" id="123828">
    <property type="type" value="gene"/>
</dbReference>
<dbReference type="neXtProt" id="NX_Q00526"/>
<dbReference type="OpenTargets" id="ENSG00000250506"/>
<dbReference type="PharmGKB" id="PA26309"/>
<dbReference type="VEuPathDB" id="HostDB:ENSG00000250506"/>
<dbReference type="eggNOG" id="KOG0594">
    <property type="taxonomic scope" value="Eukaryota"/>
</dbReference>
<dbReference type="GeneTree" id="ENSGT00940000153335"/>
<dbReference type="InParanoid" id="Q00526"/>
<dbReference type="OMA" id="PDETKWP"/>
<dbReference type="OrthoDB" id="1732493at2759"/>
<dbReference type="PAN-GO" id="Q00526">
    <property type="GO annotations" value="3 GO annotations based on evolutionary models"/>
</dbReference>
<dbReference type="PhylomeDB" id="Q00526"/>
<dbReference type="TreeFam" id="TF101021"/>
<dbReference type="BRENDA" id="2.7.11.22">
    <property type="organism ID" value="2681"/>
</dbReference>
<dbReference type="PathwayCommons" id="Q00526"/>
<dbReference type="SignaLink" id="Q00526"/>
<dbReference type="SIGNOR" id="Q00526"/>
<dbReference type="BioGRID-ORCS" id="1018">
    <property type="hits" value="18 hits in 1185 CRISPR screens"/>
</dbReference>
<dbReference type="CD-CODE" id="91857CE7">
    <property type="entry name" value="Nucleolus"/>
</dbReference>
<dbReference type="GeneWiki" id="Cyclin-dependent_kinase_3"/>
<dbReference type="GenomeRNAi" id="1018"/>
<dbReference type="Pharos" id="Q00526">
    <property type="development level" value="Tchem"/>
</dbReference>
<dbReference type="PRO" id="PR:Q00526"/>
<dbReference type="Proteomes" id="UP000005640">
    <property type="component" value="Chromosome 17"/>
</dbReference>
<dbReference type="RNAct" id="Q00526">
    <property type="molecule type" value="protein"/>
</dbReference>
<dbReference type="Bgee" id="ENSG00000250506">
    <property type="expression patterns" value="Expressed in mucosa of transverse colon and 94 other cell types or tissues"/>
</dbReference>
<dbReference type="ExpressionAtlas" id="Q00526">
    <property type="expression patterns" value="baseline and differential"/>
</dbReference>
<dbReference type="GO" id="GO:0000307">
    <property type="term" value="C:cyclin-dependent protein kinase holoenzyme complex"/>
    <property type="evidence" value="ECO:0000353"/>
    <property type="project" value="ComplexPortal"/>
</dbReference>
<dbReference type="GO" id="GO:0005737">
    <property type="term" value="C:cytoplasm"/>
    <property type="evidence" value="ECO:0000318"/>
    <property type="project" value="GO_Central"/>
</dbReference>
<dbReference type="GO" id="GO:0005634">
    <property type="term" value="C:nucleus"/>
    <property type="evidence" value="ECO:0000318"/>
    <property type="project" value="GO_Central"/>
</dbReference>
<dbReference type="GO" id="GO:0005524">
    <property type="term" value="F:ATP binding"/>
    <property type="evidence" value="ECO:0007669"/>
    <property type="project" value="UniProtKB-KW"/>
</dbReference>
<dbReference type="GO" id="GO:0030332">
    <property type="term" value="F:cyclin binding"/>
    <property type="evidence" value="ECO:0000318"/>
    <property type="project" value="GO_Central"/>
</dbReference>
<dbReference type="GO" id="GO:0004693">
    <property type="term" value="F:cyclin-dependent protein serine/threonine kinase activity"/>
    <property type="evidence" value="ECO:0000318"/>
    <property type="project" value="GO_Central"/>
</dbReference>
<dbReference type="GO" id="GO:0106310">
    <property type="term" value="F:protein serine kinase activity"/>
    <property type="evidence" value="ECO:0007669"/>
    <property type="project" value="RHEA"/>
</dbReference>
<dbReference type="GO" id="GO:0051301">
    <property type="term" value="P:cell division"/>
    <property type="evidence" value="ECO:0007669"/>
    <property type="project" value="UniProtKB-KW"/>
</dbReference>
<dbReference type="GO" id="GO:0008283">
    <property type="term" value="P:cell population proliferation"/>
    <property type="evidence" value="ECO:0000304"/>
    <property type="project" value="UniProtKB"/>
</dbReference>
<dbReference type="GO" id="GO:0006974">
    <property type="term" value="P:DNA damage response"/>
    <property type="evidence" value="ECO:0000314"/>
    <property type="project" value="MGI"/>
</dbReference>
<dbReference type="GO" id="GO:0045023">
    <property type="term" value="P:G0 to G1 transition"/>
    <property type="evidence" value="ECO:0000314"/>
    <property type="project" value="ComplexPortal"/>
</dbReference>
<dbReference type="GO" id="GO:0000082">
    <property type="term" value="P:G1/S transition of mitotic cell cycle"/>
    <property type="evidence" value="ECO:0000318"/>
    <property type="project" value="GO_Central"/>
</dbReference>
<dbReference type="GO" id="GO:0045746">
    <property type="term" value="P:negative regulation of Notch signaling pathway"/>
    <property type="evidence" value="ECO:0000314"/>
    <property type="project" value="ComplexPortal"/>
</dbReference>
<dbReference type="GO" id="GO:0010389">
    <property type="term" value="P:regulation of G2/M transition of mitotic cell cycle"/>
    <property type="evidence" value="ECO:0000318"/>
    <property type="project" value="GO_Central"/>
</dbReference>
<dbReference type="GO" id="GO:0010468">
    <property type="term" value="P:regulation of gene expression"/>
    <property type="evidence" value="ECO:0000318"/>
    <property type="project" value="GO_Central"/>
</dbReference>
<dbReference type="GO" id="GO:0007165">
    <property type="term" value="P:signal transduction"/>
    <property type="evidence" value="ECO:0000318"/>
    <property type="project" value="GO_Central"/>
</dbReference>
<dbReference type="CDD" id="cd07860">
    <property type="entry name" value="STKc_CDK2_3"/>
    <property type="match status" value="1"/>
</dbReference>
<dbReference type="FunFam" id="1.10.510.10:FF:000144">
    <property type="entry name" value="Cyclin-dependent kinase 2"/>
    <property type="match status" value="1"/>
</dbReference>
<dbReference type="FunFam" id="3.30.200.20:FF:000599">
    <property type="entry name" value="Cyclin-dependent kinase 2"/>
    <property type="match status" value="1"/>
</dbReference>
<dbReference type="Gene3D" id="3.30.200.20">
    <property type="entry name" value="Phosphorylase Kinase, domain 1"/>
    <property type="match status" value="1"/>
</dbReference>
<dbReference type="Gene3D" id="1.10.510.10">
    <property type="entry name" value="Transferase(Phosphotransferase) domain 1"/>
    <property type="match status" value="1"/>
</dbReference>
<dbReference type="InterPro" id="IPR050108">
    <property type="entry name" value="CDK"/>
</dbReference>
<dbReference type="InterPro" id="IPR011009">
    <property type="entry name" value="Kinase-like_dom_sf"/>
</dbReference>
<dbReference type="InterPro" id="IPR000719">
    <property type="entry name" value="Prot_kinase_dom"/>
</dbReference>
<dbReference type="InterPro" id="IPR017441">
    <property type="entry name" value="Protein_kinase_ATP_BS"/>
</dbReference>
<dbReference type="InterPro" id="IPR008271">
    <property type="entry name" value="Ser/Thr_kinase_AS"/>
</dbReference>
<dbReference type="PANTHER" id="PTHR24056">
    <property type="entry name" value="CELL DIVISION PROTEIN KINASE"/>
    <property type="match status" value="1"/>
</dbReference>
<dbReference type="PANTHER" id="PTHR24056:SF462">
    <property type="entry name" value="CYCLIN-DEPENDENT KINASE 3"/>
    <property type="match status" value="1"/>
</dbReference>
<dbReference type="Pfam" id="PF00069">
    <property type="entry name" value="Pkinase"/>
    <property type="match status" value="1"/>
</dbReference>
<dbReference type="SMART" id="SM00220">
    <property type="entry name" value="S_TKc"/>
    <property type="match status" value="1"/>
</dbReference>
<dbReference type="SUPFAM" id="SSF56112">
    <property type="entry name" value="Protein kinase-like (PK-like)"/>
    <property type="match status" value="1"/>
</dbReference>
<dbReference type="PROSITE" id="PS00107">
    <property type="entry name" value="PROTEIN_KINASE_ATP"/>
    <property type="match status" value="1"/>
</dbReference>
<dbReference type="PROSITE" id="PS50011">
    <property type="entry name" value="PROTEIN_KINASE_DOM"/>
    <property type="match status" value="1"/>
</dbReference>
<dbReference type="PROSITE" id="PS00108">
    <property type="entry name" value="PROTEIN_KINASE_ST"/>
    <property type="match status" value="1"/>
</dbReference>
<gene>
    <name type="primary">CDK3</name>
    <name type="synonym">CDKN3</name>
</gene>
<reference key="1">
    <citation type="journal article" date="1992" name="EMBO J.">
        <title>A family of human cdc2-related protein kinases.</title>
        <authorList>
            <person name="Meyerson M."/>
            <person name="Enders G.H."/>
            <person name="Wu C.-L."/>
            <person name="Su L.-K."/>
            <person name="Gorka C."/>
            <person name="Nelson C."/>
            <person name="Harlow E."/>
            <person name="Tsai L.-H."/>
        </authorList>
    </citation>
    <scope>NUCLEOTIDE SEQUENCE [MRNA]</scope>
    <source>
        <tissue>Fetal brain</tissue>
    </source>
</reference>
<reference key="2">
    <citation type="submission" date="2004-10" db="EMBL/GenBank/DDBJ databases">
        <authorList>
            <consortium name="NIEHS SNPs program"/>
        </authorList>
    </citation>
    <scope>NUCLEOTIDE SEQUENCE [GENOMIC DNA]</scope>
    <scope>VARIANTS ILE-226 AND THR-264</scope>
</reference>
<reference key="3">
    <citation type="journal article" date="1996" name="Genes Dev.">
        <title>Differential effects of cdk2 and cdk3 on the control of pRb and E2F function during G1 exit.</title>
        <authorList>
            <person name="Hofmann F."/>
            <person name="Livingston D.M."/>
        </authorList>
    </citation>
    <scope>FUNCTION IN G1-S TRANSITION</scope>
</reference>
<reference key="4">
    <citation type="journal article" date="2004" name="Cell">
        <title>Cyclin C/cdk3 promotes Rb-dependent G0 exit.</title>
        <authorList>
            <person name="Ren S."/>
            <person name="Rollins B.J."/>
        </authorList>
    </citation>
    <scope>FUNCTION AS RB1 KINASE</scope>
    <scope>FUNCTION IN G0-G1 TRANSITION</scope>
    <scope>INTERACTION WITH CCNC</scope>
</reference>
<reference key="5">
    <citation type="journal article" date="2008" name="Cancer Res.">
        <title>Cyclin-dependent kinase 3-mediated activating transcription factor 1 phosphorylation enhances cell transformation.</title>
        <authorList>
            <person name="Zheng D."/>
            <person name="Cho Y.-Y."/>
            <person name="Lau A.T.Y."/>
            <person name="Zhang J."/>
            <person name="Ma W.-Y."/>
            <person name="Bode A.M."/>
            <person name="Dong Z."/>
        </authorList>
    </citation>
    <scope>FUNCTION AS ATF1 KINASE</scope>
    <scope>TISSUE SPECIFICITY</scope>
    <scope>INTERACTION WITH ATF1</scope>
</reference>
<reference key="6">
    <citation type="journal article" date="2007" name="Nature">
        <title>Patterns of somatic mutation in human cancer genomes.</title>
        <authorList>
            <person name="Greenman C."/>
            <person name="Stephens P."/>
            <person name="Smith R."/>
            <person name="Dalgliesh G.L."/>
            <person name="Hunter C."/>
            <person name="Bignell G."/>
            <person name="Davies H."/>
            <person name="Teague J."/>
            <person name="Butler A."/>
            <person name="Stevens C."/>
            <person name="Edkins S."/>
            <person name="O'Meara S."/>
            <person name="Vastrik I."/>
            <person name="Schmidt E.E."/>
            <person name="Avis T."/>
            <person name="Barthorpe S."/>
            <person name="Bhamra G."/>
            <person name="Buck G."/>
            <person name="Choudhury B."/>
            <person name="Clements J."/>
            <person name="Cole J."/>
            <person name="Dicks E."/>
            <person name="Forbes S."/>
            <person name="Gray K."/>
            <person name="Halliday K."/>
            <person name="Harrison R."/>
            <person name="Hills K."/>
            <person name="Hinton J."/>
            <person name="Jenkinson A."/>
            <person name="Jones D."/>
            <person name="Menzies A."/>
            <person name="Mironenko T."/>
            <person name="Perry J."/>
            <person name="Raine K."/>
            <person name="Richardson D."/>
            <person name="Shepherd R."/>
            <person name="Small A."/>
            <person name="Tofts C."/>
            <person name="Varian J."/>
            <person name="Webb T."/>
            <person name="West S."/>
            <person name="Widaa S."/>
            <person name="Yates A."/>
            <person name="Cahill D.P."/>
            <person name="Louis D.N."/>
            <person name="Goldstraw P."/>
            <person name="Nicholson A.G."/>
            <person name="Brasseur F."/>
            <person name="Looijenga L."/>
            <person name="Weber B.L."/>
            <person name="Chiew Y.-E."/>
            <person name="DeFazio A."/>
            <person name="Greaves M.F."/>
            <person name="Green A.R."/>
            <person name="Campbell P."/>
            <person name="Birney E."/>
            <person name="Easton D.F."/>
            <person name="Chenevix-Trench G."/>
            <person name="Tan M.-H."/>
            <person name="Khoo S.K."/>
            <person name="Teh B.T."/>
            <person name="Yuen S.T."/>
            <person name="Leung S.Y."/>
            <person name="Wooster R."/>
            <person name="Futreal P.A."/>
            <person name="Stratton M.R."/>
        </authorList>
    </citation>
    <scope>VARIANTS [LARGE SCALE ANALYSIS] ASN-106; THR-124; HIS-214 AND THR-264</scope>
</reference>
<comment type="function">
    <text evidence="4 6 7">Serine/threonine-protein kinase that plays a critical role in the control of the eukaryotic cell cycle; involved in G0-G1 and G1-S cell cycle transitions. Interacts with CCNC/cyclin-C during interphase. Phosphorylates histone H1, ATF1, RB1 and CABLES1. ATF1 phosphorylation triggers ATF1 transactivation and transcriptional activities, and promotes cell proliferation and transformation. CDK3/cyclin-C mediated RB1 phosphorylation is required for G0-G1 transition. Promotes G1-S transition probably by contributing to the activation of E2F1, E2F2 and E2F3 in a RB1-independent manner.</text>
</comment>
<comment type="catalytic activity">
    <reaction>
        <text>L-seryl-[protein] + ATP = O-phospho-L-seryl-[protein] + ADP + H(+)</text>
        <dbReference type="Rhea" id="RHEA:17989"/>
        <dbReference type="Rhea" id="RHEA-COMP:9863"/>
        <dbReference type="Rhea" id="RHEA-COMP:11604"/>
        <dbReference type="ChEBI" id="CHEBI:15378"/>
        <dbReference type="ChEBI" id="CHEBI:29999"/>
        <dbReference type="ChEBI" id="CHEBI:30616"/>
        <dbReference type="ChEBI" id="CHEBI:83421"/>
        <dbReference type="ChEBI" id="CHEBI:456216"/>
        <dbReference type="EC" id="2.7.11.22"/>
    </reaction>
</comment>
<comment type="catalytic activity">
    <reaction>
        <text>L-threonyl-[protein] + ATP = O-phospho-L-threonyl-[protein] + ADP + H(+)</text>
        <dbReference type="Rhea" id="RHEA:46608"/>
        <dbReference type="Rhea" id="RHEA-COMP:11060"/>
        <dbReference type="Rhea" id="RHEA-COMP:11605"/>
        <dbReference type="ChEBI" id="CHEBI:15378"/>
        <dbReference type="ChEBI" id="CHEBI:30013"/>
        <dbReference type="ChEBI" id="CHEBI:30616"/>
        <dbReference type="ChEBI" id="CHEBI:61977"/>
        <dbReference type="ChEBI" id="CHEBI:456216"/>
        <dbReference type="EC" id="2.7.11.22"/>
    </reaction>
</comment>
<comment type="subunit">
    <text evidence="1 4 6">Interacts with CABLES1 and CABLES2 (By similarity). Interacts with ATF1. Binding to CCNC/cyclin-C promotes RB1 phosphorylation.</text>
</comment>
<comment type="interaction">
    <interactant intactId="EBI-1245761">
        <id>Q00526</id>
    </interactant>
    <interactant intactId="EBI-395261">
        <id>P24863</id>
        <label>CCNC</label>
    </interactant>
    <organismsDiffer>false</organismsDiffer>
    <experiments>7</experiments>
</comment>
<comment type="interaction">
    <interactant intactId="EBI-1245761">
        <id>Q00526</id>
    </interactant>
    <interactant intactId="EBI-375013">
        <id>P30281</id>
        <label>CCND3</label>
    </interactant>
    <organismsDiffer>false</organismsDiffer>
    <experiments>5</experiments>
</comment>
<comment type="interaction">
    <interactant intactId="EBI-1245761">
        <id>Q00526</id>
    </interactant>
    <interactant intactId="EBI-375033">
        <id>O96020</id>
        <label>CCNE2</label>
    </interactant>
    <organismsDiffer>false</organismsDiffer>
    <experiments>4</experiments>
</comment>
<comment type="interaction">
    <interactant intactId="EBI-1245761">
        <id>Q00526</id>
    </interactant>
    <interactant intactId="EBI-741406">
        <id>P51946</id>
        <label>CCNH</label>
    </interactant>
    <organismsDiffer>false</organismsDiffer>
    <experiments>3</experiments>
</comment>
<comment type="interaction">
    <interactant intactId="EBI-1245761">
        <id>Q00526</id>
    </interactant>
    <interactant intactId="EBI-1104653">
        <id>Q14094</id>
        <label>CCNI</label>
    </interactant>
    <organismsDiffer>false</organismsDiffer>
    <experiments>3</experiments>
</comment>
<comment type="interaction">
    <interactant intactId="EBI-1245761">
        <id>Q00526</id>
    </interactant>
    <interactant intactId="EBI-375077">
        <id>P38936</id>
        <label>CDKN1A</label>
    </interactant>
    <organismsDiffer>false</organismsDiffer>
    <experiments>8</experiments>
</comment>
<comment type="interaction">
    <interactant intactId="EBI-1245761">
        <id>Q00526</id>
    </interactant>
    <interactant intactId="EBI-456371">
        <id>P61024</id>
        <label>CKS1B</label>
    </interactant>
    <organismsDiffer>false</organismsDiffer>
    <experiments>7</experiments>
</comment>
<comment type="interaction">
    <interactant intactId="EBI-1245761">
        <id>Q00526</id>
    </interactant>
    <interactant intactId="EBI-711840">
        <id>P33552</id>
        <label>CKS2</label>
    </interactant>
    <organismsDiffer>false</organismsDiffer>
    <experiments>6</experiments>
</comment>
<comment type="interaction">
    <interactant intactId="EBI-1245761">
        <id>Q00526</id>
    </interactant>
    <interactant intactId="EBI-983612">
        <id>O15409</id>
        <label>FOXP2</label>
    </interactant>
    <organismsDiffer>false</organismsDiffer>
    <experiments>3</experiments>
</comment>
<comment type="interaction">
    <interactant intactId="EBI-1245761">
        <id>Q00526</id>
    </interactant>
    <interactant intactId="EBI-352572">
        <id>P08238</id>
        <label>HSP90AB1</label>
    </interactant>
    <organismsDiffer>false</organismsDiffer>
    <experiments>4</experiments>
</comment>
<comment type="interaction">
    <interactant intactId="EBI-1245761">
        <id>Q00526</id>
    </interactant>
    <interactant intactId="EBI-12039345">
        <id>Q9UBR4-2</id>
        <label>LHX3</label>
    </interactant>
    <organismsDiffer>false</organismsDiffer>
    <experiments>3</experiments>
</comment>
<comment type="interaction">
    <interactant intactId="EBI-1245761">
        <id>Q00526</id>
    </interactant>
    <interactant intactId="EBI-2865388">
        <id>Q969G2</id>
        <label>LHX4</label>
    </interactant>
    <organismsDiffer>false</organismsDiffer>
    <experiments>3</experiments>
</comment>
<comment type="interaction">
    <interactant intactId="EBI-1245761">
        <id>Q00526</id>
    </interactant>
    <interactant intactId="EBI-16439278">
        <id>Q6FHY5</id>
        <label>MEOX2</label>
    </interactant>
    <organismsDiffer>false</organismsDiffer>
    <experiments>3</experiments>
</comment>
<comment type="interaction">
    <interactant intactId="EBI-1245761">
        <id>Q00526</id>
    </interactant>
    <interactant intactId="EBI-5461341">
        <id>Q9H3P2</id>
        <label>NELFA</label>
    </interactant>
    <organismsDiffer>false</organismsDiffer>
    <experiments>3</experiments>
</comment>
<comment type="interaction">
    <interactant intactId="EBI-1245761">
        <id>Q00526</id>
    </interactant>
    <interactant intactId="EBI-13334799">
        <id>Q5TZ20</id>
        <label>OR2G6</label>
    </interactant>
    <organismsDiffer>false</organismsDiffer>
    <experiments>3</experiments>
</comment>
<comment type="interaction">
    <interactant intactId="EBI-1245761">
        <id>Q00526</id>
    </interactant>
    <interactant intactId="EBI-9087860">
        <id>P32243-2</id>
        <label>OTX2</label>
    </interactant>
    <organismsDiffer>false</organismsDiffer>
    <experiments>3</experiments>
</comment>
<comment type="interaction">
    <interactant intactId="EBI-1245761">
        <id>Q00526</id>
    </interactant>
    <interactant intactId="EBI-296331">
        <id>Q02548</id>
        <label>PAX5</label>
    </interactant>
    <organismsDiffer>false</organismsDiffer>
    <experiments>3</experiments>
</comment>
<comment type="interaction">
    <interactant intactId="EBI-1245761">
        <id>Q00526</id>
    </interactant>
    <interactant intactId="EBI-747278">
        <id>P26367</id>
        <label>PAX6</label>
    </interactant>
    <organismsDiffer>false</organismsDiffer>
    <experiments>3</experiments>
</comment>
<comment type="interaction">
    <interactant intactId="EBI-1245761">
        <id>Q00526</id>
    </interactant>
    <interactant intactId="EBI-2683132">
        <id>Q06710</id>
        <label>PAX8</label>
    </interactant>
    <organismsDiffer>false</organismsDiffer>
    <experiments>3</experiments>
</comment>
<comment type="interaction">
    <interactant intactId="EBI-1245761">
        <id>Q00526</id>
    </interactant>
    <interactant intactId="EBI-717233">
        <id>Q9H0H5</id>
        <label>RACGAP1</label>
    </interactant>
    <organismsDiffer>false</organismsDiffer>
    <experiments>3</experiments>
</comment>
<comment type="interaction">
    <interactant intactId="EBI-1245761">
        <id>Q00526</id>
    </interactant>
    <interactant intactId="EBI-12047907">
        <id>A6NLX3</id>
        <label>SPDYE4</label>
    </interactant>
    <organismsDiffer>false</organismsDiffer>
    <experiments>3</experiments>
</comment>
<comment type="interaction">
    <interactant intactId="EBI-1245761">
        <id>Q00526</id>
    </interactant>
    <interactant intactId="EBI-356498">
        <id>P62258</id>
        <label>YWHAE</label>
    </interactant>
    <organismsDiffer>false</organismsDiffer>
    <experiments>2</experiments>
</comment>
<comment type="interaction">
    <interactant intactId="EBI-1245761">
        <id>Q00526</id>
    </interactant>
    <interactant intactId="EBI-12903728">
        <id>A0A384NQ31</id>
    </interactant>
    <organismsDiffer>false</organismsDiffer>
    <experiments>3</experiments>
</comment>
<comment type="tissue specificity">
    <text evidence="6">Expressed in cancer cell lines and glioblastoma tissue.</text>
</comment>
<comment type="similarity">
    <text evidence="9">Belongs to the protein kinase superfamily. CMGC Ser/Thr protein kinase family. CDC2/CDKX subfamily.</text>
</comment>
<protein>
    <recommendedName>
        <fullName>Cyclin-dependent kinase 3</fullName>
        <ecNumber>2.7.11.22</ecNumber>
    </recommendedName>
    <alternativeName>
        <fullName>Cell division protein kinase 3</fullName>
    </alternativeName>
</protein>
<proteinExistence type="evidence at protein level"/>
<accession>Q00526</accession>